<reference key="1">
    <citation type="journal article" date="2008" name="PLoS Genet.">
        <title>Complete genome sequence of the N2-fixing broad host range endophyte Klebsiella pneumoniae 342 and virulence predictions verified in mice.</title>
        <authorList>
            <person name="Fouts D.E."/>
            <person name="Tyler H.L."/>
            <person name="DeBoy R.T."/>
            <person name="Daugherty S."/>
            <person name="Ren Q."/>
            <person name="Badger J.H."/>
            <person name="Durkin A.S."/>
            <person name="Huot H."/>
            <person name="Shrivastava S."/>
            <person name="Kothari S."/>
            <person name="Dodson R.J."/>
            <person name="Mohamoud Y."/>
            <person name="Khouri H."/>
            <person name="Roesch L.F.W."/>
            <person name="Krogfelt K.A."/>
            <person name="Struve C."/>
            <person name="Triplett E.W."/>
            <person name="Methe B.A."/>
        </authorList>
    </citation>
    <scope>NUCLEOTIDE SEQUENCE [LARGE SCALE GENOMIC DNA]</scope>
    <source>
        <strain>342</strain>
    </source>
</reference>
<protein>
    <recommendedName>
        <fullName evidence="1">NADH-quinone oxidoreductase subunit N</fullName>
        <ecNumber evidence="1">7.1.1.-</ecNumber>
    </recommendedName>
    <alternativeName>
        <fullName evidence="1">NADH dehydrogenase I subunit N</fullName>
    </alternativeName>
    <alternativeName>
        <fullName evidence="1">NDH-1 subunit N</fullName>
    </alternativeName>
</protein>
<feature type="chain" id="PRO_1000145872" description="NADH-quinone oxidoreductase subunit N">
    <location>
        <begin position="1"/>
        <end position="485"/>
    </location>
</feature>
<feature type="transmembrane region" description="Helical" evidence="1">
    <location>
        <begin position="8"/>
        <end position="28"/>
    </location>
</feature>
<feature type="transmembrane region" description="Helical" evidence="1">
    <location>
        <begin position="35"/>
        <end position="55"/>
    </location>
</feature>
<feature type="transmembrane region" description="Helical" evidence="1">
    <location>
        <begin position="75"/>
        <end position="95"/>
    </location>
</feature>
<feature type="transmembrane region" description="Helical" evidence="1">
    <location>
        <begin position="105"/>
        <end position="125"/>
    </location>
</feature>
<feature type="transmembrane region" description="Helical" evidence="1">
    <location>
        <begin position="127"/>
        <end position="147"/>
    </location>
</feature>
<feature type="transmembrane region" description="Helical" evidence="1">
    <location>
        <begin position="159"/>
        <end position="179"/>
    </location>
</feature>
<feature type="transmembrane region" description="Helical" evidence="1">
    <location>
        <begin position="203"/>
        <end position="223"/>
    </location>
</feature>
<feature type="transmembrane region" description="Helical" evidence="1">
    <location>
        <begin position="235"/>
        <end position="255"/>
    </location>
</feature>
<feature type="transmembrane region" description="Helical" evidence="1">
    <location>
        <begin position="271"/>
        <end position="291"/>
    </location>
</feature>
<feature type="transmembrane region" description="Helical" evidence="1">
    <location>
        <begin position="297"/>
        <end position="317"/>
    </location>
</feature>
<feature type="transmembrane region" description="Helical" evidence="1">
    <location>
        <begin position="326"/>
        <end position="346"/>
    </location>
</feature>
<feature type="transmembrane region" description="Helical" evidence="1">
    <location>
        <begin position="374"/>
        <end position="394"/>
    </location>
</feature>
<feature type="transmembrane region" description="Helical" evidence="1">
    <location>
        <begin position="408"/>
        <end position="430"/>
    </location>
</feature>
<feature type="transmembrane region" description="Helical" evidence="1">
    <location>
        <begin position="455"/>
        <end position="475"/>
    </location>
</feature>
<gene>
    <name evidence="1" type="primary">nuoN</name>
    <name type="ordered locus">KPK_1483</name>
</gene>
<keyword id="KW-0997">Cell inner membrane</keyword>
<keyword id="KW-1003">Cell membrane</keyword>
<keyword id="KW-0472">Membrane</keyword>
<keyword id="KW-0520">NAD</keyword>
<keyword id="KW-0874">Quinone</keyword>
<keyword id="KW-1278">Translocase</keyword>
<keyword id="KW-0812">Transmembrane</keyword>
<keyword id="KW-1133">Transmembrane helix</keyword>
<keyword id="KW-0813">Transport</keyword>
<keyword id="KW-0830">Ubiquinone</keyword>
<proteinExistence type="inferred from homology"/>
<comment type="function">
    <text evidence="1">NDH-1 shuttles electrons from NADH, via FMN and iron-sulfur (Fe-S) centers, to quinones in the respiratory chain. The immediate electron acceptor for the enzyme in this species is believed to be ubiquinone. Couples the redox reaction to proton translocation (for every two electrons transferred, four hydrogen ions are translocated across the cytoplasmic membrane), and thus conserves the redox energy in a proton gradient.</text>
</comment>
<comment type="catalytic activity">
    <reaction evidence="1">
        <text>a quinone + NADH + 5 H(+)(in) = a quinol + NAD(+) + 4 H(+)(out)</text>
        <dbReference type="Rhea" id="RHEA:57888"/>
        <dbReference type="ChEBI" id="CHEBI:15378"/>
        <dbReference type="ChEBI" id="CHEBI:24646"/>
        <dbReference type="ChEBI" id="CHEBI:57540"/>
        <dbReference type="ChEBI" id="CHEBI:57945"/>
        <dbReference type="ChEBI" id="CHEBI:132124"/>
    </reaction>
</comment>
<comment type="subunit">
    <text evidence="1">NDH-1 is composed of 13 different subunits. Subunits NuoA, H, J, K, L, M, N constitute the membrane sector of the complex.</text>
</comment>
<comment type="subcellular location">
    <subcellularLocation>
        <location evidence="1">Cell inner membrane</location>
        <topology evidence="1">Multi-pass membrane protein</topology>
    </subcellularLocation>
</comment>
<comment type="similarity">
    <text evidence="1">Belongs to the complex I subunit 2 family.</text>
</comment>
<dbReference type="EC" id="7.1.1.-" evidence="1"/>
<dbReference type="EMBL" id="CP000964">
    <property type="protein sequence ID" value="ACI10422.1"/>
    <property type="molecule type" value="Genomic_DNA"/>
</dbReference>
<dbReference type="SMR" id="B5XNW6"/>
<dbReference type="KEGG" id="kpe:KPK_1483"/>
<dbReference type="HOGENOM" id="CLU_007100_1_5_6"/>
<dbReference type="Proteomes" id="UP000001734">
    <property type="component" value="Chromosome"/>
</dbReference>
<dbReference type="GO" id="GO:0005886">
    <property type="term" value="C:plasma membrane"/>
    <property type="evidence" value="ECO:0007669"/>
    <property type="project" value="UniProtKB-SubCell"/>
</dbReference>
<dbReference type="GO" id="GO:0008137">
    <property type="term" value="F:NADH dehydrogenase (ubiquinone) activity"/>
    <property type="evidence" value="ECO:0007669"/>
    <property type="project" value="InterPro"/>
</dbReference>
<dbReference type="GO" id="GO:0050136">
    <property type="term" value="F:NADH:ubiquinone reductase (non-electrogenic) activity"/>
    <property type="evidence" value="ECO:0007669"/>
    <property type="project" value="UniProtKB-UniRule"/>
</dbReference>
<dbReference type="GO" id="GO:0048038">
    <property type="term" value="F:quinone binding"/>
    <property type="evidence" value="ECO:0007669"/>
    <property type="project" value="UniProtKB-KW"/>
</dbReference>
<dbReference type="GO" id="GO:0042773">
    <property type="term" value="P:ATP synthesis coupled electron transport"/>
    <property type="evidence" value="ECO:0007669"/>
    <property type="project" value="InterPro"/>
</dbReference>
<dbReference type="HAMAP" id="MF_00445">
    <property type="entry name" value="NDH1_NuoN_1"/>
    <property type="match status" value="1"/>
</dbReference>
<dbReference type="InterPro" id="IPR010096">
    <property type="entry name" value="NADH-Q_OxRdtase_suN/2"/>
</dbReference>
<dbReference type="InterPro" id="IPR001750">
    <property type="entry name" value="ND/Mrp_TM"/>
</dbReference>
<dbReference type="NCBIfam" id="TIGR01770">
    <property type="entry name" value="NDH_I_N"/>
    <property type="match status" value="1"/>
</dbReference>
<dbReference type="NCBIfam" id="NF004439">
    <property type="entry name" value="PRK05777.1-1"/>
    <property type="match status" value="1"/>
</dbReference>
<dbReference type="PANTHER" id="PTHR22773">
    <property type="entry name" value="NADH DEHYDROGENASE"/>
    <property type="match status" value="1"/>
</dbReference>
<dbReference type="Pfam" id="PF00361">
    <property type="entry name" value="Proton_antipo_M"/>
    <property type="match status" value="1"/>
</dbReference>
<evidence type="ECO:0000255" key="1">
    <source>
        <dbReference type="HAMAP-Rule" id="MF_00445"/>
    </source>
</evidence>
<name>NUON_KLEP3</name>
<sequence length="485" mass="52109">MTITPQQLIALLPLLIVGLTVVVVMLSIAWRRNHFLNATLSVLGLNAALVSLWFVGQNGAMDVTPMIRVDGYAMLYTGLVLLASLATCTFAYPWLEGYKDNKEEFYLLVLIAALGGILLAGANHLAALFLGIELISLPLFGLVGYAFRQKRSLEASIKYTILSAAASSFLLFGMALVYANSGNLSFLALGKSLADNTLHEPLLLAGLGLMIVGLGFKLSLVPFHLWTPDVYQGAPAPVSTFLATASKIAIFGVVMRLFLYMPVGNSEAVRVVLGLIAFASIIFGNLMALSQTNIKRLLGYSSISHLGYLLVALIALQSGEMSMEAVGVYLAGYLFSSLGAFGVVSLMSSPYRGPDADSLFSYRGLFWHRPILSAVMTVMMLSLAGIPMTLGFIGKFYVLAVGVHAHLWWLVAAVVVGSAIGLYYYLRVAVSLYLSAPEQLNRDAPSNWQYSAGGIVVLISALLVLVLGIWPQPLISIVQLATPLM</sequence>
<organism>
    <name type="scientific">Klebsiella pneumoniae (strain 342)</name>
    <dbReference type="NCBI Taxonomy" id="507522"/>
    <lineage>
        <taxon>Bacteria</taxon>
        <taxon>Pseudomonadati</taxon>
        <taxon>Pseudomonadota</taxon>
        <taxon>Gammaproteobacteria</taxon>
        <taxon>Enterobacterales</taxon>
        <taxon>Enterobacteriaceae</taxon>
        <taxon>Klebsiella/Raoultella group</taxon>
        <taxon>Klebsiella</taxon>
        <taxon>Klebsiella pneumoniae complex</taxon>
    </lineage>
</organism>
<accession>B5XNW6</accession>